<gene>
    <name evidence="1" type="primary">trpS</name>
    <name type="ordered locus">CPE0633</name>
</gene>
<dbReference type="EC" id="6.1.1.2" evidence="1"/>
<dbReference type="EMBL" id="BA000016">
    <property type="protein sequence ID" value="BAB80339.1"/>
    <property type="molecule type" value="Genomic_DNA"/>
</dbReference>
<dbReference type="RefSeq" id="WP_011009944.1">
    <property type="nucleotide sequence ID" value="NC_003366.1"/>
</dbReference>
<dbReference type="SMR" id="Q8XMQ5"/>
<dbReference type="STRING" id="195102.gene:10489894"/>
<dbReference type="KEGG" id="cpe:CPE0633"/>
<dbReference type="HOGENOM" id="CLU_029244_1_1_9"/>
<dbReference type="Proteomes" id="UP000000818">
    <property type="component" value="Chromosome"/>
</dbReference>
<dbReference type="GO" id="GO:0005829">
    <property type="term" value="C:cytosol"/>
    <property type="evidence" value="ECO:0007669"/>
    <property type="project" value="TreeGrafter"/>
</dbReference>
<dbReference type="GO" id="GO:0005524">
    <property type="term" value="F:ATP binding"/>
    <property type="evidence" value="ECO:0007669"/>
    <property type="project" value="UniProtKB-UniRule"/>
</dbReference>
<dbReference type="GO" id="GO:0004830">
    <property type="term" value="F:tryptophan-tRNA ligase activity"/>
    <property type="evidence" value="ECO:0007669"/>
    <property type="project" value="UniProtKB-UniRule"/>
</dbReference>
<dbReference type="GO" id="GO:0006436">
    <property type="term" value="P:tryptophanyl-tRNA aminoacylation"/>
    <property type="evidence" value="ECO:0007669"/>
    <property type="project" value="UniProtKB-UniRule"/>
</dbReference>
<dbReference type="CDD" id="cd00806">
    <property type="entry name" value="TrpRS_core"/>
    <property type="match status" value="1"/>
</dbReference>
<dbReference type="FunFam" id="1.10.240.10:FF:000002">
    <property type="entry name" value="Tryptophan--tRNA ligase"/>
    <property type="match status" value="1"/>
</dbReference>
<dbReference type="Gene3D" id="3.40.50.620">
    <property type="entry name" value="HUPs"/>
    <property type="match status" value="1"/>
</dbReference>
<dbReference type="Gene3D" id="1.10.240.10">
    <property type="entry name" value="Tyrosyl-Transfer RNA Synthetase"/>
    <property type="match status" value="1"/>
</dbReference>
<dbReference type="HAMAP" id="MF_00140_B">
    <property type="entry name" value="Trp_tRNA_synth_B"/>
    <property type="match status" value="1"/>
</dbReference>
<dbReference type="InterPro" id="IPR001412">
    <property type="entry name" value="aa-tRNA-synth_I_CS"/>
</dbReference>
<dbReference type="InterPro" id="IPR002305">
    <property type="entry name" value="aa-tRNA-synth_Ic"/>
</dbReference>
<dbReference type="InterPro" id="IPR014729">
    <property type="entry name" value="Rossmann-like_a/b/a_fold"/>
</dbReference>
<dbReference type="InterPro" id="IPR002306">
    <property type="entry name" value="Trp-tRNA-ligase"/>
</dbReference>
<dbReference type="InterPro" id="IPR024109">
    <property type="entry name" value="Trp-tRNA-ligase_bac-type"/>
</dbReference>
<dbReference type="InterPro" id="IPR050203">
    <property type="entry name" value="Trp-tRNA_synthetase"/>
</dbReference>
<dbReference type="NCBIfam" id="TIGR00233">
    <property type="entry name" value="trpS"/>
    <property type="match status" value="1"/>
</dbReference>
<dbReference type="PANTHER" id="PTHR43766">
    <property type="entry name" value="TRYPTOPHAN--TRNA LIGASE, MITOCHONDRIAL"/>
    <property type="match status" value="1"/>
</dbReference>
<dbReference type="PANTHER" id="PTHR43766:SF1">
    <property type="entry name" value="TRYPTOPHAN--TRNA LIGASE, MITOCHONDRIAL"/>
    <property type="match status" value="1"/>
</dbReference>
<dbReference type="Pfam" id="PF00579">
    <property type="entry name" value="tRNA-synt_1b"/>
    <property type="match status" value="1"/>
</dbReference>
<dbReference type="PRINTS" id="PR01039">
    <property type="entry name" value="TRNASYNTHTRP"/>
</dbReference>
<dbReference type="SUPFAM" id="SSF52374">
    <property type="entry name" value="Nucleotidylyl transferase"/>
    <property type="match status" value="1"/>
</dbReference>
<dbReference type="PROSITE" id="PS00178">
    <property type="entry name" value="AA_TRNA_LIGASE_I"/>
    <property type="match status" value="1"/>
</dbReference>
<accession>Q8XMQ5</accession>
<sequence>MEDKKKIIFSGIKPSGDLTLGNYLGAIKNWTKLQEEYDCYFCVVDLHAITVKQLPADLRRRTLEVLAIYIASGINPEENTLFIQSHVPAHSEASWLLTCNSYMGELSRMTQYKDKSKKMGDSIGAGLFNYPVLMAADILLYNADLVPVGKDQMQHLELARDIGTRFNNSYSKTFTIPEGYVPKEGAKIMDLQDPSKKMSKSDANPNGFILIMDEPNVIRKKISRAVTDSIGIVNYTDEQPGVKNLINILCAIKGYTPDEVVKMYDGKGYAEFKNDVAEAIVEELAPVQEKVKALLGDKKALEEIYKKGAEKANYAAMKTLRKMQKKIGLIPR</sequence>
<reference key="1">
    <citation type="journal article" date="2002" name="Proc. Natl. Acad. Sci. U.S.A.">
        <title>Complete genome sequence of Clostridium perfringens, an anaerobic flesh-eater.</title>
        <authorList>
            <person name="Shimizu T."/>
            <person name="Ohtani K."/>
            <person name="Hirakawa H."/>
            <person name="Ohshima K."/>
            <person name="Yamashita A."/>
            <person name="Shiba T."/>
            <person name="Ogasawara N."/>
            <person name="Hattori M."/>
            <person name="Kuhara S."/>
            <person name="Hayashi H."/>
        </authorList>
    </citation>
    <scope>NUCLEOTIDE SEQUENCE [LARGE SCALE GENOMIC DNA]</scope>
    <source>
        <strain>13 / Type A</strain>
    </source>
</reference>
<organism>
    <name type="scientific">Clostridium perfringens (strain 13 / Type A)</name>
    <dbReference type="NCBI Taxonomy" id="195102"/>
    <lineage>
        <taxon>Bacteria</taxon>
        <taxon>Bacillati</taxon>
        <taxon>Bacillota</taxon>
        <taxon>Clostridia</taxon>
        <taxon>Eubacteriales</taxon>
        <taxon>Clostridiaceae</taxon>
        <taxon>Clostridium</taxon>
    </lineage>
</organism>
<keyword id="KW-0030">Aminoacyl-tRNA synthetase</keyword>
<keyword id="KW-0067">ATP-binding</keyword>
<keyword id="KW-0963">Cytoplasm</keyword>
<keyword id="KW-0436">Ligase</keyword>
<keyword id="KW-0547">Nucleotide-binding</keyword>
<keyword id="KW-0648">Protein biosynthesis</keyword>
<keyword id="KW-1185">Reference proteome</keyword>
<evidence type="ECO:0000255" key="1">
    <source>
        <dbReference type="HAMAP-Rule" id="MF_00140"/>
    </source>
</evidence>
<proteinExistence type="inferred from homology"/>
<protein>
    <recommendedName>
        <fullName evidence="1">Tryptophan--tRNA ligase</fullName>
        <ecNumber evidence="1">6.1.1.2</ecNumber>
    </recommendedName>
    <alternativeName>
        <fullName evidence="1">Tryptophanyl-tRNA synthetase</fullName>
        <shortName evidence="1">TrpRS</shortName>
    </alternativeName>
</protein>
<comment type="function">
    <text evidence="1">Catalyzes the attachment of tryptophan to tRNA(Trp).</text>
</comment>
<comment type="catalytic activity">
    <reaction evidence="1">
        <text>tRNA(Trp) + L-tryptophan + ATP = L-tryptophyl-tRNA(Trp) + AMP + diphosphate + H(+)</text>
        <dbReference type="Rhea" id="RHEA:24080"/>
        <dbReference type="Rhea" id="RHEA-COMP:9671"/>
        <dbReference type="Rhea" id="RHEA-COMP:9705"/>
        <dbReference type="ChEBI" id="CHEBI:15378"/>
        <dbReference type="ChEBI" id="CHEBI:30616"/>
        <dbReference type="ChEBI" id="CHEBI:33019"/>
        <dbReference type="ChEBI" id="CHEBI:57912"/>
        <dbReference type="ChEBI" id="CHEBI:78442"/>
        <dbReference type="ChEBI" id="CHEBI:78535"/>
        <dbReference type="ChEBI" id="CHEBI:456215"/>
        <dbReference type="EC" id="6.1.1.2"/>
    </reaction>
</comment>
<comment type="subunit">
    <text evidence="1">Homodimer.</text>
</comment>
<comment type="subcellular location">
    <subcellularLocation>
        <location evidence="1">Cytoplasm</location>
    </subcellularLocation>
</comment>
<comment type="similarity">
    <text evidence="1">Belongs to the class-I aminoacyl-tRNA synthetase family.</text>
</comment>
<name>SYW_CLOPE</name>
<feature type="chain" id="PRO_0000136623" description="Tryptophan--tRNA ligase">
    <location>
        <begin position="1"/>
        <end position="332"/>
    </location>
</feature>
<feature type="short sequence motif" description="'HIGH' region" evidence="1">
    <location>
        <begin position="14"/>
        <end position="22"/>
    </location>
</feature>
<feature type="short sequence motif" description="'KMSKS' region" evidence="1">
    <location>
        <begin position="197"/>
        <end position="201"/>
    </location>
</feature>
<feature type="binding site" evidence="1">
    <location>
        <begin position="13"/>
        <end position="15"/>
    </location>
    <ligand>
        <name>ATP</name>
        <dbReference type="ChEBI" id="CHEBI:30616"/>
    </ligand>
</feature>
<feature type="binding site" evidence="1">
    <location>
        <begin position="21"/>
        <end position="22"/>
    </location>
    <ligand>
        <name>ATP</name>
        <dbReference type="ChEBI" id="CHEBI:30616"/>
    </ligand>
</feature>
<feature type="binding site" evidence="1">
    <location>
        <position position="137"/>
    </location>
    <ligand>
        <name>L-tryptophan</name>
        <dbReference type="ChEBI" id="CHEBI:57912"/>
    </ligand>
</feature>
<feature type="binding site" evidence="1">
    <location>
        <begin position="149"/>
        <end position="151"/>
    </location>
    <ligand>
        <name>ATP</name>
        <dbReference type="ChEBI" id="CHEBI:30616"/>
    </ligand>
</feature>
<feature type="binding site" evidence="1">
    <location>
        <position position="188"/>
    </location>
    <ligand>
        <name>ATP</name>
        <dbReference type="ChEBI" id="CHEBI:30616"/>
    </ligand>
</feature>
<feature type="binding site" evidence="1">
    <location>
        <begin position="197"/>
        <end position="201"/>
    </location>
    <ligand>
        <name>ATP</name>
        <dbReference type="ChEBI" id="CHEBI:30616"/>
    </ligand>
</feature>